<organism>
    <name type="scientific">Mycobacterium leprae (strain TN)</name>
    <dbReference type="NCBI Taxonomy" id="272631"/>
    <lineage>
        <taxon>Bacteria</taxon>
        <taxon>Bacillati</taxon>
        <taxon>Actinomycetota</taxon>
        <taxon>Actinomycetes</taxon>
        <taxon>Mycobacteriales</taxon>
        <taxon>Mycobacteriaceae</taxon>
        <taxon>Mycobacterium</taxon>
    </lineage>
</organism>
<gene>
    <name type="primary">hisS</name>
    <name type="ordered locus">ML0494</name>
    <name type="ORF">B1177_C3_248</name>
    <name type="ORF">MLCB1259.12</name>
</gene>
<accession>P46696</accession>
<accession>O69488</accession>
<dbReference type="EC" id="6.1.1.21"/>
<dbReference type="EMBL" id="U00011">
    <property type="protein sequence ID" value="AAA17103.1"/>
    <property type="molecule type" value="Genomic_DNA"/>
</dbReference>
<dbReference type="EMBL" id="AL023591">
    <property type="protein sequence ID" value="CAA19087.1"/>
    <property type="molecule type" value="Genomic_DNA"/>
</dbReference>
<dbReference type="EMBL" id="AL583918">
    <property type="protein sequence ID" value="CAC30002.1"/>
    <property type="molecule type" value="Genomic_DNA"/>
</dbReference>
<dbReference type="PIR" id="F86970">
    <property type="entry name" value="F86970"/>
</dbReference>
<dbReference type="PIR" id="S72739">
    <property type="entry name" value="S72739"/>
</dbReference>
<dbReference type="RefSeq" id="NP_301433.1">
    <property type="nucleotide sequence ID" value="NC_002677.1"/>
</dbReference>
<dbReference type="RefSeq" id="WP_010907757.1">
    <property type="nucleotide sequence ID" value="NC_002677.1"/>
</dbReference>
<dbReference type="SMR" id="P46696"/>
<dbReference type="STRING" id="272631.gene:17574315"/>
<dbReference type="KEGG" id="mle:ML0494"/>
<dbReference type="PATRIC" id="fig|272631.5.peg.858"/>
<dbReference type="Leproma" id="ML0494"/>
<dbReference type="eggNOG" id="COG0124">
    <property type="taxonomic scope" value="Bacteria"/>
</dbReference>
<dbReference type="HOGENOM" id="CLU_025113_1_1_11"/>
<dbReference type="OrthoDB" id="9800814at2"/>
<dbReference type="BRENDA" id="6.1.1.21">
    <property type="organism ID" value="3504"/>
</dbReference>
<dbReference type="Proteomes" id="UP000000806">
    <property type="component" value="Chromosome"/>
</dbReference>
<dbReference type="GO" id="GO:0005737">
    <property type="term" value="C:cytoplasm"/>
    <property type="evidence" value="ECO:0007669"/>
    <property type="project" value="UniProtKB-SubCell"/>
</dbReference>
<dbReference type="GO" id="GO:0005524">
    <property type="term" value="F:ATP binding"/>
    <property type="evidence" value="ECO:0007669"/>
    <property type="project" value="UniProtKB-UniRule"/>
</dbReference>
<dbReference type="GO" id="GO:0004821">
    <property type="term" value="F:histidine-tRNA ligase activity"/>
    <property type="evidence" value="ECO:0007669"/>
    <property type="project" value="UniProtKB-UniRule"/>
</dbReference>
<dbReference type="GO" id="GO:0006427">
    <property type="term" value="P:histidyl-tRNA aminoacylation"/>
    <property type="evidence" value="ECO:0007669"/>
    <property type="project" value="UniProtKB-UniRule"/>
</dbReference>
<dbReference type="CDD" id="cd00773">
    <property type="entry name" value="HisRS-like_core"/>
    <property type="match status" value="1"/>
</dbReference>
<dbReference type="CDD" id="cd00859">
    <property type="entry name" value="HisRS_anticodon"/>
    <property type="match status" value="1"/>
</dbReference>
<dbReference type="Gene3D" id="3.40.50.800">
    <property type="entry name" value="Anticodon-binding domain"/>
    <property type="match status" value="1"/>
</dbReference>
<dbReference type="Gene3D" id="3.30.930.10">
    <property type="entry name" value="Bira Bifunctional Protein, Domain 2"/>
    <property type="match status" value="1"/>
</dbReference>
<dbReference type="HAMAP" id="MF_00127">
    <property type="entry name" value="His_tRNA_synth"/>
    <property type="match status" value="1"/>
</dbReference>
<dbReference type="InterPro" id="IPR006195">
    <property type="entry name" value="aa-tRNA-synth_II"/>
</dbReference>
<dbReference type="InterPro" id="IPR045864">
    <property type="entry name" value="aa-tRNA-synth_II/BPL/LPL"/>
</dbReference>
<dbReference type="InterPro" id="IPR004154">
    <property type="entry name" value="Anticodon-bd"/>
</dbReference>
<dbReference type="InterPro" id="IPR036621">
    <property type="entry name" value="Anticodon-bd_dom_sf"/>
</dbReference>
<dbReference type="InterPro" id="IPR015807">
    <property type="entry name" value="His-tRNA-ligase"/>
</dbReference>
<dbReference type="InterPro" id="IPR041715">
    <property type="entry name" value="HisRS-like_core"/>
</dbReference>
<dbReference type="InterPro" id="IPR004516">
    <property type="entry name" value="HisRS/HisZ"/>
</dbReference>
<dbReference type="InterPro" id="IPR033656">
    <property type="entry name" value="HisRS_anticodon"/>
</dbReference>
<dbReference type="NCBIfam" id="TIGR00442">
    <property type="entry name" value="hisS"/>
    <property type="match status" value="1"/>
</dbReference>
<dbReference type="PANTHER" id="PTHR43707:SF1">
    <property type="entry name" value="HISTIDINE--TRNA LIGASE, MITOCHONDRIAL-RELATED"/>
    <property type="match status" value="1"/>
</dbReference>
<dbReference type="PANTHER" id="PTHR43707">
    <property type="entry name" value="HISTIDYL-TRNA SYNTHETASE"/>
    <property type="match status" value="1"/>
</dbReference>
<dbReference type="Pfam" id="PF03129">
    <property type="entry name" value="HGTP_anticodon"/>
    <property type="match status" value="1"/>
</dbReference>
<dbReference type="Pfam" id="PF13393">
    <property type="entry name" value="tRNA-synt_His"/>
    <property type="match status" value="1"/>
</dbReference>
<dbReference type="PIRSF" id="PIRSF001549">
    <property type="entry name" value="His-tRNA_synth"/>
    <property type="match status" value="1"/>
</dbReference>
<dbReference type="SUPFAM" id="SSF52954">
    <property type="entry name" value="Class II aaRS ABD-related"/>
    <property type="match status" value="1"/>
</dbReference>
<dbReference type="SUPFAM" id="SSF55681">
    <property type="entry name" value="Class II aaRS and biotin synthetases"/>
    <property type="match status" value="1"/>
</dbReference>
<dbReference type="PROSITE" id="PS50862">
    <property type="entry name" value="AA_TRNA_LIGASE_II"/>
    <property type="match status" value="1"/>
</dbReference>
<feature type="chain" id="PRO_0000136194" description="Histidine--tRNA ligase">
    <location>
        <begin position="1"/>
        <end position="427"/>
    </location>
</feature>
<feature type="sequence conflict" description="In Ref. 1; AAA17103." evidence="2" ref="1">
    <original>A</original>
    <variation>R</variation>
    <location>
        <position position="41"/>
    </location>
</feature>
<protein>
    <recommendedName>
        <fullName>Histidine--tRNA ligase</fullName>
        <ecNumber>6.1.1.21</ecNumber>
    </recommendedName>
    <alternativeName>
        <fullName>Histidyl-tRNA synthetase</fullName>
        <shortName>HisRS</shortName>
    </alternativeName>
</protein>
<evidence type="ECO:0000250" key="1"/>
<evidence type="ECO:0000305" key="2"/>
<comment type="catalytic activity">
    <reaction>
        <text>tRNA(His) + L-histidine + ATP = L-histidyl-tRNA(His) + AMP + diphosphate + H(+)</text>
        <dbReference type="Rhea" id="RHEA:17313"/>
        <dbReference type="Rhea" id="RHEA-COMP:9665"/>
        <dbReference type="Rhea" id="RHEA-COMP:9689"/>
        <dbReference type="ChEBI" id="CHEBI:15378"/>
        <dbReference type="ChEBI" id="CHEBI:30616"/>
        <dbReference type="ChEBI" id="CHEBI:33019"/>
        <dbReference type="ChEBI" id="CHEBI:57595"/>
        <dbReference type="ChEBI" id="CHEBI:78442"/>
        <dbReference type="ChEBI" id="CHEBI:78527"/>
        <dbReference type="ChEBI" id="CHEBI:456215"/>
        <dbReference type="EC" id="6.1.1.21"/>
    </reaction>
</comment>
<comment type="subunit">
    <text evidence="1">Homodimer.</text>
</comment>
<comment type="subcellular location">
    <subcellularLocation>
        <location evidence="1">Cytoplasm</location>
    </subcellularLocation>
</comment>
<comment type="similarity">
    <text evidence="2">Belongs to the class-II aminoacyl-tRNA synthetase family.</text>
</comment>
<proteinExistence type="inferred from homology"/>
<name>SYH_MYCLE</name>
<keyword id="KW-0030">Aminoacyl-tRNA synthetase</keyword>
<keyword id="KW-0067">ATP-binding</keyword>
<keyword id="KW-0963">Cytoplasm</keyword>
<keyword id="KW-0436">Ligase</keyword>
<keyword id="KW-0547">Nucleotide-binding</keyword>
<keyword id="KW-0648">Protein biosynthesis</keyword>
<keyword id="KW-1185">Reference proteome</keyword>
<sequence>MTESCTVFSFSGPKGIPDYFPPDSAQFVAVRDGLLTAARRAGYGDIELPVFEDTALFARGVGESTDVVAKEMYTFADRGDRSVTLRPEGTAGVVRAVIEHGLDRGALPVKLCYAGPFFRYERPQAGRCRQLQQVGVEAIGVDDPALDAEVITIADAGFRSLGLDGFQLEITSLGDGTCRPQYRKLLQEFLLQLDLDEDTRRRAELNPLRVLDDKRPQVQAMTAAAPVLLDHLSDGAKQHFDTVLAHLDALRVPYVINPRMVRGLDYYTKTTFEFVHPGLGAQSGIGGGGRYDGLMRQLGGQDLSGIGFGLGVDRTLLALHAEGKTVGETTRCDVFGVSLGEAAKLKVAMLAGQLRAAGVRVDLIYGDRGIRGAMRAAGRSGARIALIVDDCAIKADGVGVRDLATGEQISVAVDSVVAEVISRIAPS</sequence>
<reference key="1">
    <citation type="submission" date="1994-03" db="EMBL/GenBank/DDBJ databases">
        <authorList>
            <person name="Smith D.R."/>
            <person name="Robison K."/>
        </authorList>
    </citation>
    <scope>NUCLEOTIDE SEQUENCE [GENOMIC DNA]</scope>
</reference>
<reference key="2">
    <citation type="journal article" date="2001" name="Nature">
        <title>Massive gene decay in the leprosy bacillus.</title>
        <authorList>
            <person name="Cole S.T."/>
            <person name="Eiglmeier K."/>
            <person name="Parkhill J."/>
            <person name="James K.D."/>
            <person name="Thomson N.R."/>
            <person name="Wheeler P.R."/>
            <person name="Honore N."/>
            <person name="Garnier T."/>
            <person name="Churcher C.M."/>
            <person name="Harris D.E."/>
            <person name="Mungall K.L."/>
            <person name="Basham D."/>
            <person name="Brown D."/>
            <person name="Chillingworth T."/>
            <person name="Connor R."/>
            <person name="Davies R.M."/>
            <person name="Devlin K."/>
            <person name="Duthoy S."/>
            <person name="Feltwell T."/>
            <person name="Fraser A."/>
            <person name="Hamlin N."/>
            <person name="Holroyd S."/>
            <person name="Hornsby T."/>
            <person name="Jagels K."/>
            <person name="Lacroix C."/>
            <person name="Maclean J."/>
            <person name="Moule S."/>
            <person name="Murphy L.D."/>
            <person name="Oliver K."/>
            <person name="Quail M.A."/>
            <person name="Rajandream M.A."/>
            <person name="Rutherford K.M."/>
            <person name="Rutter S."/>
            <person name="Seeger K."/>
            <person name="Simon S."/>
            <person name="Simmonds M."/>
            <person name="Skelton J."/>
            <person name="Squares R."/>
            <person name="Squares S."/>
            <person name="Stevens K."/>
            <person name="Taylor K."/>
            <person name="Whitehead S."/>
            <person name="Woodward J.R."/>
            <person name="Barrell B.G."/>
        </authorList>
    </citation>
    <scope>NUCLEOTIDE SEQUENCE [LARGE SCALE GENOMIC DNA]</scope>
    <source>
        <strain>TN</strain>
    </source>
</reference>